<sequence>MSADKFRDSTHYRDWIFTEEDLSKTRAKVNEKFTNIVRERMLEELSLQNKEASLEVLPPTLTVEEELELVNYYSFQLNALSSALSLPTHIRSTAILFFKRFYLINSVMEYSPKIISFTSLFLATKCNDHYISIEQFCKNMPKTTPEEVLEYEFNVCQSLKWDLYVWLPFRPLQGFLLDCQTVLPKVAVEKFYECHDLSKKFLIETLHSDIYFLHSPSIIALGAIYHTNPTICLQYIEAKKIPELQPLIISISANLKATKKFKIEKKKAQDYGRKLYFCMNPLRNKSSALYLKRKAEEESTNNNKWAKKFSTSSNVLDKNPFE</sequence>
<protein>
    <recommendedName>
        <fullName>Cyclin mcs2</fullName>
    </recommendedName>
    <alternativeName>
        <fullName>Mitotic catastrophe suppressor 2</fullName>
    </alternativeName>
</protein>
<dbReference type="EMBL" id="S59895">
    <property type="protein sequence ID" value="AAB26193.1"/>
    <property type="molecule type" value="Genomic_DNA"/>
</dbReference>
<dbReference type="EMBL" id="CU329671">
    <property type="protein sequence ID" value="CAC08541.1"/>
    <property type="molecule type" value="Genomic_DNA"/>
</dbReference>
<dbReference type="PIR" id="S35380">
    <property type="entry name" value="S35380"/>
</dbReference>
<dbReference type="RefSeq" id="NP_595776.1">
    <property type="nucleotide sequence ID" value="NM_001021676.2"/>
</dbReference>
<dbReference type="SMR" id="P36613"/>
<dbReference type="BioGRID" id="277082">
    <property type="interactions" value="170"/>
</dbReference>
<dbReference type="FunCoup" id="P36613">
    <property type="interactions" value="720"/>
</dbReference>
<dbReference type="IntAct" id="P36613">
    <property type="interactions" value="3"/>
</dbReference>
<dbReference type="STRING" id="284812.P36613"/>
<dbReference type="iPTMnet" id="P36613"/>
<dbReference type="PaxDb" id="4896-SPBP16F5.02.1"/>
<dbReference type="EnsemblFungi" id="SPBP16F5.02.1">
    <property type="protein sequence ID" value="SPBP16F5.02.1:pep"/>
    <property type="gene ID" value="SPBP16F5.02"/>
</dbReference>
<dbReference type="GeneID" id="2540555"/>
<dbReference type="KEGG" id="spo:2540555"/>
<dbReference type="PomBase" id="SPBP16F5.02">
    <property type="gene designation" value="mcs2"/>
</dbReference>
<dbReference type="VEuPathDB" id="FungiDB:SPBP16F5.02"/>
<dbReference type="eggNOG" id="KOG2496">
    <property type="taxonomic scope" value="Eukaryota"/>
</dbReference>
<dbReference type="HOGENOM" id="CLU_022620_4_0_1"/>
<dbReference type="InParanoid" id="P36613"/>
<dbReference type="OMA" id="FRVEQNT"/>
<dbReference type="PhylomeDB" id="P36613"/>
<dbReference type="Reactome" id="R-SPO-113418">
    <property type="pathway name" value="Formation of the Early Elongation Complex"/>
</dbReference>
<dbReference type="Reactome" id="R-SPO-5696395">
    <property type="pathway name" value="Formation of Incision Complex in GG-NER"/>
</dbReference>
<dbReference type="Reactome" id="R-SPO-674695">
    <property type="pathway name" value="RNA Polymerase II Pre-transcription Events"/>
</dbReference>
<dbReference type="Reactome" id="R-SPO-6781823">
    <property type="pathway name" value="Formation of TC-NER Pre-Incision Complex"/>
</dbReference>
<dbReference type="Reactome" id="R-SPO-6782135">
    <property type="pathway name" value="Dual incision in TC-NER"/>
</dbReference>
<dbReference type="Reactome" id="R-SPO-6782210">
    <property type="pathway name" value="Gap-filling DNA repair synthesis and ligation in TC-NER"/>
</dbReference>
<dbReference type="Reactome" id="R-SPO-6796648">
    <property type="pathway name" value="TP53 Regulates Transcription of DNA Repair Genes"/>
</dbReference>
<dbReference type="Reactome" id="R-SPO-69231">
    <property type="pathway name" value="Cyclin D associated events in G1"/>
</dbReference>
<dbReference type="Reactome" id="R-SPO-69656">
    <property type="pathway name" value="Cyclin A:Cdk2-associated events at S phase entry"/>
</dbReference>
<dbReference type="Reactome" id="R-SPO-72086">
    <property type="pathway name" value="mRNA Capping"/>
</dbReference>
<dbReference type="Reactome" id="R-SPO-73772">
    <property type="pathway name" value="RNA Polymerase I Promoter Escape"/>
</dbReference>
<dbReference type="Reactome" id="R-SPO-73776">
    <property type="pathway name" value="RNA Polymerase II Promoter Escape"/>
</dbReference>
<dbReference type="Reactome" id="R-SPO-73779">
    <property type="pathway name" value="RNA Polymerase II Transcription Pre-Initiation And Promoter Opening"/>
</dbReference>
<dbReference type="Reactome" id="R-SPO-75953">
    <property type="pathway name" value="RNA Polymerase II Transcription Initiation"/>
</dbReference>
<dbReference type="Reactome" id="R-SPO-76042">
    <property type="pathway name" value="RNA Polymerase II Transcription Initiation And Promoter Clearance"/>
</dbReference>
<dbReference type="Reactome" id="R-SPO-77075">
    <property type="pathway name" value="RNA Pol II CTD phosphorylation and interaction with CE"/>
</dbReference>
<dbReference type="PRO" id="PR:P36613"/>
<dbReference type="Proteomes" id="UP000002485">
    <property type="component" value="Chromosome II"/>
</dbReference>
<dbReference type="GO" id="GO:0005634">
    <property type="term" value="C:nucleus"/>
    <property type="evidence" value="ECO:0000314"/>
    <property type="project" value="PomBase"/>
</dbReference>
<dbReference type="GO" id="GO:0070985">
    <property type="term" value="C:transcription factor TFIIK complex"/>
    <property type="evidence" value="ECO:0000314"/>
    <property type="project" value="PomBase"/>
</dbReference>
<dbReference type="GO" id="GO:0061575">
    <property type="term" value="F:cyclin-dependent protein serine/threonine kinase activator activity"/>
    <property type="evidence" value="ECO:0000314"/>
    <property type="project" value="PomBase"/>
</dbReference>
<dbReference type="GO" id="GO:0016538">
    <property type="term" value="F:cyclin-dependent protein serine/threonine kinase regulator activity"/>
    <property type="evidence" value="ECO:0000318"/>
    <property type="project" value="GO_Central"/>
</dbReference>
<dbReference type="GO" id="GO:0043539">
    <property type="term" value="F:protein serine/threonine kinase activator activity"/>
    <property type="evidence" value="ECO:0000269"/>
    <property type="project" value="PomBase"/>
</dbReference>
<dbReference type="GO" id="GO:0016251">
    <property type="term" value="F:RNA polymerase II general transcription initiation factor activity"/>
    <property type="evidence" value="ECO:0000305"/>
    <property type="project" value="PomBase"/>
</dbReference>
<dbReference type="GO" id="GO:0051301">
    <property type="term" value="P:cell division"/>
    <property type="evidence" value="ECO:0007669"/>
    <property type="project" value="UniProtKB-KW"/>
</dbReference>
<dbReference type="GO" id="GO:0006357">
    <property type="term" value="P:regulation of transcription by RNA polymerase II"/>
    <property type="evidence" value="ECO:0007669"/>
    <property type="project" value="InterPro"/>
</dbReference>
<dbReference type="GO" id="GO:0006367">
    <property type="term" value="P:transcription initiation at RNA polymerase II promoter"/>
    <property type="evidence" value="ECO:0000269"/>
    <property type="project" value="PomBase"/>
</dbReference>
<dbReference type="CDD" id="cd20524">
    <property type="entry name" value="CYCLIN_CCNH_rpt1"/>
    <property type="match status" value="1"/>
</dbReference>
<dbReference type="CDD" id="cd20525">
    <property type="entry name" value="CYCLIN_CCNH_rpt2"/>
    <property type="match status" value="1"/>
</dbReference>
<dbReference type="FunFam" id="1.10.472.10:FF:000095">
    <property type="entry name" value="Cyclin Ccl1, putative (AFU_orthologue AFUA_5G07030)"/>
    <property type="match status" value="1"/>
</dbReference>
<dbReference type="Gene3D" id="1.10.472.10">
    <property type="entry name" value="Cyclin-like"/>
    <property type="match status" value="1"/>
</dbReference>
<dbReference type="InterPro" id="IPR013763">
    <property type="entry name" value="Cyclin-like_dom"/>
</dbReference>
<dbReference type="InterPro" id="IPR036915">
    <property type="entry name" value="Cyclin-like_sf"/>
</dbReference>
<dbReference type="InterPro" id="IPR043198">
    <property type="entry name" value="Cyclin/Ssn8"/>
</dbReference>
<dbReference type="InterPro" id="IPR031658">
    <property type="entry name" value="Cyclin_C_2"/>
</dbReference>
<dbReference type="InterPro" id="IPR006671">
    <property type="entry name" value="Cyclin_N"/>
</dbReference>
<dbReference type="InterPro" id="IPR027081">
    <property type="entry name" value="CyclinH/Ccl1"/>
</dbReference>
<dbReference type="NCBIfam" id="TIGR00569">
    <property type="entry name" value="ccl1"/>
    <property type="match status" value="1"/>
</dbReference>
<dbReference type="PANTHER" id="PTHR10026">
    <property type="entry name" value="CYCLIN"/>
    <property type="match status" value="1"/>
</dbReference>
<dbReference type="Pfam" id="PF16899">
    <property type="entry name" value="Cyclin_C_2"/>
    <property type="match status" value="1"/>
</dbReference>
<dbReference type="Pfam" id="PF00134">
    <property type="entry name" value="Cyclin_N"/>
    <property type="match status" value="1"/>
</dbReference>
<dbReference type="SMART" id="SM00385">
    <property type="entry name" value="CYCLIN"/>
    <property type="match status" value="1"/>
</dbReference>
<dbReference type="SUPFAM" id="SSF47954">
    <property type="entry name" value="Cyclin-like"/>
    <property type="match status" value="2"/>
</dbReference>
<proteinExistence type="evidence at protein level"/>
<keyword id="KW-0131">Cell cycle</keyword>
<keyword id="KW-0132">Cell division</keyword>
<keyword id="KW-0195">Cyclin</keyword>
<keyword id="KW-0539">Nucleus</keyword>
<keyword id="KW-0597">Phosphoprotein</keyword>
<keyword id="KW-1185">Reference proteome</keyword>
<reference key="1">
    <citation type="journal article" date="1993" name="EMBO J.">
        <title>Characterization of the fission yeast mcs2 cyclin and its associated protein kinase activity.</title>
        <authorList>
            <person name="Molz L."/>
            <person name="Beach D."/>
        </authorList>
    </citation>
    <scope>NUCLEOTIDE SEQUENCE [GENOMIC DNA]</scope>
    <scope>FUNCTION</scope>
    <scope>SUBCELLULAR LOCATION</scope>
</reference>
<reference key="2">
    <citation type="journal article" date="2002" name="Nature">
        <title>The genome sequence of Schizosaccharomyces pombe.</title>
        <authorList>
            <person name="Wood V."/>
            <person name="Gwilliam R."/>
            <person name="Rajandream M.A."/>
            <person name="Lyne M.H."/>
            <person name="Lyne R."/>
            <person name="Stewart A."/>
            <person name="Sgouros J.G."/>
            <person name="Peat N."/>
            <person name="Hayles J."/>
            <person name="Baker S.G."/>
            <person name="Basham D."/>
            <person name="Bowman S."/>
            <person name="Brooks K."/>
            <person name="Brown D."/>
            <person name="Brown S."/>
            <person name="Chillingworth T."/>
            <person name="Churcher C.M."/>
            <person name="Collins M."/>
            <person name="Connor R."/>
            <person name="Cronin A."/>
            <person name="Davis P."/>
            <person name="Feltwell T."/>
            <person name="Fraser A."/>
            <person name="Gentles S."/>
            <person name="Goble A."/>
            <person name="Hamlin N."/>
            <person name="Harris D.E."/>
            <person name="Hidalgo J."/>
            <person name="Hodgson G."/>
            <person name="Holroyd S."/>
            <person name="Hornsby T."/>
            <person name="Howarth S."/>
            <person name="Huckle E.J."/>
            <person name="Hunt S."/>
            <person name="Jagels K."/>
            <person name="James K.D."/>
            <person name="Jones L."/>
            <person name="Jones M."/>
            <person name="Leather S."/>
            <person name="McDonald S."/>
            <person name="McLean J."/>
            <person name="Mooney P."/>
            <person name="Moule S."/>
            <person name="Mungall K.L."/>
            <person name="Murphy L.D."/>
            <person name="Niblett D."/>
            <person name="Odell C."/>
            <person name="Oliver K."/>
            <person name="O'Neil S."/>
            <person name="Pearson D."/>
            <person name="Quail M.A."/>
            <person name="Rabbinowitsch E."/>
            <person name="Rutherford K.M."/>
            <person name="Rutter S."/>
            <person name="Saunders D."/>
            <person name="Seeger K."/>
            <person name="Sharp S."/>
            <person name="Skelton J."/>
            <person name="Simmonds M.N."/>
            <person name="Squares R."/>
            <person name="Squares S."/>
            <person name="Stevens K."/>
            <person name="Taylor K."/>
            <person name="Taylor R.G."/>
            <person name="Tivey A."/>
            <person name="Walsh S.V."/>
            <person name="Warren T."/>
            <person name="Whitehead S."/>
            <person name="Woodward J.R."/>
            <person name="Volckaert G."/>
            <person name="Aert R."/>
            <person name="Robben J."/>
            <person name="Grymonprez B."/>
            <person name="Weltjens I."/>
            <person name="Vanstreels E."/>
            <person name="Rieger M."/>
            <person name="Schaefer M."/>
            <person name="Mueller-Auer S."/>
            <person name="Gabel C."/>
            <person name="Fuchs M."/>
            <person name="Duesterhoeft A."/>
            <person name="Fritzc C."/>
            <person name="Holzer E."/>
            <person name="Moestl D."/>
            <person name="Hilbert H."/>
            <person name="Borzym K."/>
            <person name="Langer I."/>
            <person name="Beck A."/>
            <person name="Lehrach H."/>
            <person name="Reinhardt R."/>
            <person name="Pohl T.M."/>
            <person name="Eger P."/>
            <person name="Zimmermann W."/>
            <person name="Wedler H."/>
            <person name="Wambutt R."/>
            <person name="Purnelle B."/>
            <person name="Goffeau A."/>
            <person name="Cadieu E."/>
            <person name="Dreano S."/>
            <person name="Gloux S."/>
            <person name="Lelaure V."/>
            <person name="Mottier S."/>
            <person name="Galibert F."/>
            <person name="Aves S.J."/>
            <person name="Xiang Z."/>
            <person name="Hunt C."/>
            <person name="Moore K."/>
            <person name="Hurst S.M."/>
            <person name="Lucas M."/>
            <person name="Rochet M."/>
            <person name="Gaillardin C."/>
            <person name="Tallada V.A."/>
            <person name="Garzon A."/>
            <person name="Thode G."/>
            <person name="Daga R.R."/>
            <person name="Cruzado L."/>
            <person name="Jimenez J."/>
            <person name="Sanchez M."/>
            <person name="del Rey F."/>
            <person name="Benito J."/>
            <person name="Dominguez A."/>
            <person name="Revuelta J.L."/>
            <person name="Moreno S."/>
            <person name="Armstrong J."/>
            <person name="Forsburg S.L."/>
            <person name="Cerutti L."/>
            <person name="Lowe T."/>
            <person name="McCombie W.R."/>
            <person name="Paulsen I."/>
            <person name="Potashkin J."/>
            <person name="Shpakovski G.V."/>
            <person name="Ussery D."/>
            <person name="Barrell B.G."/>
            <person name="Nurse P."/>
        </authorList>
    </citation>
    <scope>NUCLEOTIDE SEQUENCE [LARGE SCALE GENOMIC DNA]</scope>
    <source>
        <strain>972 / ATCC 24843</strain>
    </source>
</reference>
<reference key="3">
    <citation type="journal article" date="1995" name="EMBO J.">
        <title>Identification of a cdk-activating kinase in fission yeast.</title>
        <authorList>
            <person name="Buck V."/>
            <person name="Russell P."/>
            <person name="Millar J.B.A."/>
        </authorList>
    </citation>
    <scope>INTERACTION WITH CRK1/MCS6</scope>
    <source>
        <strain>972 / ATCC 24843</strain>
    </source>
</reference>
<reference key="4">
    <citation type="journal article" date="1995" name="EMBO J.">
        <title>Schizosaccharomyces pombe Mop1-Mcs2 is related to mammalian CAK.</title>
        <authorList>
            <person name="Damagnez V."/>
            <person name="Makela T.P."/>
            <person name="Cottarel G."/>
        </authorList>
    </citation>
    <scope>INTERACTION WITH CRK1/MCS6</scope>
</reference>
<reference key="5">
    <citation type="journal article" date="2003" name="J. Biol. Chem.">
        <title>Mediator influences Schizosaccharomyces pombe RNA polymerase II-dependent transcription in vitro.</title>
        <authorList>
            <person name="Spaehr H."/>
            <person name="Khorosjutina O."/>
            <person name="Baraznenok V."/>
            <person name="Linder T."/>
            <person name="Samuelsen C.O."/>
            <person name="Hermand D."/>
            <person name="Maekelae T.P."/>
            <person name="Holmberg S."/>
            <person name="Gustafsson C.M."/>
        </authorList>
    </citation>
    <scope>SUBUNIT</scope>
</reference>
<reference key="6">
    <citation type="journal article" date="2004" name="Biochem. Biophys. Res. Commun.">
        <title>Mcs2 and a novel CAK subunit Pmh1 associate with Skp1 in fission yeast.</title>
        <authorList>
            <person name="Bamps S."/>
            <person name="Westerling T."/>
            <person name="Pihlak A."/>
            <person name="Tafforeau L."/>
            <person name="Vandenhaute J."/>
            <person name="Maekelae T.P."/>
            <person name="Hermand D."/>
        </authorList>
    </citation>
    <scope>INTERACTION WITH SKP1 AND CRK1/MCS6</scope>
    <source>
        <strain>972 / ATCC 24843</strain>
    </source>
</reference>
<reference key="7">
    <citation type="journal article" date="2006" name="Nat. Biotechnol.">
        <title>ORFeome cloning and global analysis of protein localization in the fission yeast Schizosaccharomyces pombe.</title>
        <authorList>
            <person name="Matsuyama A."/>
            <person name="Arai R."/>
            <person name="Yashiroda Y."/>
            <person name="Shirai A."/>
            <person name="Kamata A."/>
            <person name="Sekido S."/>
            <person name="Kobayashi Y."/>
            <person name="Hashimoto A."/>
            <person name="Hamamoto M."/>
            <person name="Hiraoka Y."/>
            <person name="Horinouchi S."/>
            <person name="Yoshida M."/>
        </authorList>
    </citation>
    <scope>SUBCELLULAR LOCATION [LARGE SCALE ANALYSIS]</scope>
</reference>
<reference key="8">
    <citation type="journal article" date="2008" name="J. Proteome Res.">
        <title>Phosphoproteome analysis of fission yeast.</title>
        <authorList>
            <person name="Wilson-Grady J.T."/>
            <person name="Villen J."/>
            <person name="Gygi S.P."/>
        </authorList>
    </citation>
    <scope>PHOSPHORYLATION [LARGE SCALE ANALYSIS] AT SER-310</scope>
    <scope>IDENTIFICATION BY MASS SPECTROMETRY</scope>
</reference>
<accession>P36613</accession>
<organism>
    <name type="scientific">Schizosaccharomyces pombe (strain 972 / ATCC 24843)</name>
    <name type="common">Fission yeast</name>
    <dbReference type="NCBI Taxonomy" id="284812"/>
    <lineage>
        <taxon>Eukaryota</taxon>
        <taxon>Fungi</taxon>
        <taxon>Dikarya</taxon>
        <taxon>Ascomycota</taxon>
        <taxon>Taphrinomycotina</taxon>
        <taxon>Schizosaccharomycetes</taxon>
        <taxon>Schizosaccharomycetales</taxon>
        <taxon>Schizosaccharomycetaceae</taxon>
        <taxon>Schizosaccharomyces</taxon>
    </lineage>
</organism>
<gene>
    <name type="primary">mcs2</name>
    <name type="ORF">SPBP16F5.02</name>
</gene>
<comment type="function">
    <text evidence="5">Essential for progression through the cell cycle. Possesses kinase activity that can be detected when myelin basic protein (MBP) is provided as an exogenous substrate.</text>
</comment>
<comment type="subunit">
    <text evidence="1 2 6 7">One of the nine subunits forming the core-TFIIH basal transcription factor. Interacts with crk1 and skp1.</text>
</comment>
<comment type="interaction">
    <interactant intactId="EBI-1168694">
        <id>P36613</id>
    </interactant>
    <interactant intactId="EBI-1172248">
        <id>Q9Y709</id>
        <label>skp1</label>
    </interactant>
    <organismsDiffer>false</organismsDiffer>
    <experiments>3</experiments>
</comment>
<comment type="subcellular location">
    <subcellularLocation>
        <location evidence="3 5">Nucleus</location>
    </subcellularLocation>
</comment>
<comment type="similarity">
    <text evidence="8">Belongs to the cyclin family. Cyclin C subfamily.</text>
</comment>
<feature type="chain" id="PRO_0000080505" description="Cyclin mcs2">
    <location>
        <begin position="1"/>
        <end position="322"/>
    </location>
</feature>
<feature type="modified residue" description="Phosphoserine" evidence="4">
    <location>
        <position position="310"/>
    </location>
</feature>
<name>CGM2_SCHPO</name>
<evidence type="ECO:0000269" key="1">
    <source>
    </source>
</evidence>
<evidence type="ECO:0000269" key="2">
    <source>
    </source>
</evidence>
<evidence type="ECO:0000269" key="3">
    <source>
    </source>
</evidence>
<evidence type="ECO:0000269" key="4">
    <source>
    </source>
</evidence>
<evidence type="ECO:0000269" key="5">
    <source>
    </source>
</evidence>
<evidence type="ECO:0000269" key="6">
    <source>
    </source>
</evidence>
<evidence type="ECO:0000269" key="7">
    <source>
    </source>
</evidence>
<evidence type="ECO:0000305" key="8"/>